<reference key="1">
    <citation type="journal article" date="2005" name="Proc. Natl. Acad. Sci. U.S.A.">
        <title>Complete genome sequence of Vibrio fischeri: a symbiotic bacterium with pathogenic congeners.</title>
        <authorList>
            <person name="Ruby E.G."/>
            <person name="Urbanowski M."/>
            <person name="Campbell J."/>
            <person name="Dunn A."/>
            <person name="Faini M."/>
            <person name="Gunsalus R."/>
            <person name="Lostroh P."/>
            <person name="Lupp C."/>
            <person name="McCann J."/>
            <person name="Millikan D."/>
            <person name="Schaefer A."/>
            <person name="Stabb E."/>
            <person name="Stevens A."/>
            <person name="Visick K."/>
            <person name="Whistler C."/>
            <person name="Greenberg E.P."/>
        </authorList>
    </citation>
    <scope>NUCLEOTIDE SEQUENCE [LARGE SCALE GENOMIC DNA]</scope>
    <source>
        <strain>ATCC 700601 / ES114</strain>
    </source>
</reference>
<protein>
    <recommendedName>
        <fullName evidence="1">tRNA-2-methylthio-N(6)-dimethylallyladenosine synthase</fullName>
        <ecNumber evidence="1">2.8.4.3</ecNumber>
    </recommendedName>
    <alternativeName>
        <fullName evidence="1">(Dimethylallyl)adenosine tRNA methylthiotransferase MiaB</fullName>
    </alternativeName>
    <alternativeName>
        <fullName evidence="1">tRNA-i(6)A37 methylthiotransferase</fullName>
    </alternativeName>
</protein>
<sequence>MTKKLLIKTWGCQMNEYDSSKMADLLGAANGYELTEEPTEADVLLLNTCSIREKAQEKVFHQLGRWKNLKDKKPDLVIGVGGCVATQEGDHIRQRAPYVDVIFGPQTLHRLPEMIRQSQSNEKPVMDISFPEIEKFDNLPEPKAEGATAFVSIMEGCSKYCTYCVVPYTRGEEVSRPLDDVLFEIAQLAEQGVREVNLLGQNVNAYRGPMHDGDICTFAELLRMVASIDGIDRLRFTTSHPLEFGDDIIAVYEDTPELVSFLHLPVQSGSDRILTMMKRPHTAIEYKSIIRKLRKARPDIQISSDFIVGFPGETAKDFQDTMKLIKDVDFDMSFSFIFSARPGTPAADYPCDIPEQEKKDRLAELQQQVNSQAMRYSRLMLDTEQRVLVEGPSKKNLMELRARTENNRVVNFEGSADLIGQFVDVKITDVFANSLRGELVRTEKDMGLRVVMTPAEMMEKTRREDDLGVGTFTP</sequence>
<proteinExistence type="inferred from homology"/>
<evidence type="ECO:0000255" key="1">
    <source>
        <dbReference type="HAMAP-Rule" id="MF_01864"/>
    </source>
</evidence>
<evidence type="ECO:0000255" key="2">
    <source>
        <dbReference type="PROSITE-ProRule" id="PRU01266"/>
    </source>
</evidence>
<comment type="function">
    <text evidence="1">Catalyzes the methylthiolation of N6-(dimethylallyl)adenosine (i(6)A), leading to the formation of 2-methylthio-N6-(dimethylallyl)adenosine (ms(2)i(6)A) at position 37 in tRNAs that read codons beginning with uridine.</text>
</comment>
<comment type="catalytic activity">
    <reaction evidence="1">
        <text>N(6)-dimethylallyladenosine(37) in tRNA + (sulfur carrier)-SH + AH2 + 2 S-adenosyl-L-methionine = 2-methylsulfanyl-N(6)-dimethylallyladenosine(37) in tRNA + (sulfur carrier)-H + 5'-deoxyadenosine + L-methionine + A + S-adenosyl-L-homocysteine + 2 H(+)</text>
        <dbReference type="Rhea" id="RHEA:37067"/>
        <dbReference type="Rhea" id="RHEA-COMP:10375"/>
        <dbReference type="Rhea" id="RHEA-COMP:10376"/>
        <dbReference type="Rhea" id="RHEA-COMP:14737"/>
        <dbReference type="Rhea" id="RHEA-COMP:14739"/>
        <dbReference type="ChEBI" id="CHEBI:13193"/>
        <dbReference type="ChEBI" id="CHEBI:15378"/>
        <dbReference type="ChEBI" id="CHEBI:17319"/>
        <dbReference type="ChEBI" id="CHEBI:17499"/>
        <dbReference type="ChEBI" id="CHEBI:29917"/>
        <dbReference type="ChEBI" id="CHEBI:57844"/>
        <dbReference type="ChEBI" id="CHEBI:57856"/>
        <dbReference type="ChEBI" id="CHEBI:59789"/>
        <dbReference type="ChEBI" id="CHEBI:64428"/>
        <dbReference type="ChEBI" id="CHEBI:74415"/>
        <dbReference type="ChEBI" id="CHEBI:74417"/>
        <dbReference type="EC" id="2.8.4.3"/>
    </reaction>
</comment>
<comment type="cofactor">
    <cofactor evidence="1">
        <name>[4Fe-4S] cluster</name>
        <dbReference type="ChEBI" id="CHEBI:49883"/>
    </cofactor>
    <text evidence="1">Binds 2 [4Fe-4S] clusters. One cluster is coordinated with 3 cysteines and an exchangeable S-adenosyl-L-methionine.</text>
</comment>
<comment type="subunit">
    <text evidence="1">Monomer.</text>
</comment>
<comment type="subcellular location">
    <subcellularLocation>
        <location evidence="1">Cytoplasm</location>
    </subcellularLocation>
</comment>
<comment type="similarity">
    <text evidence="1">Belongs to the methylthiotransferase family. MiaB subfamily.</text>
</comment>
<feature type="chain" id="PRO_0000374631" description="tRNA-2-methylthio-N(6)-dimethylallyladenosine synthase">
    <location>
        <begin position="1"/>
        <end position="474"/>
    </location>
</feature>
<feature type="domain" description="MTTase N-terminal" evidence="1">
    <location>
        <begin position="3"/>
        <end position="120"/>
    </location>
</feature>
<feature type="domain" description="Radical SAM core" evidence="2">
    <location>
        <begin position="143"/>
        <end position="375"/>
    </location>
</feature>
<feature type="domain" description="TRAM" evidence="1">
    <location>
        <begin position="378"/>
        <end position="441"/>
    </location>
</feature>
<feature type="binding site" evidence="1">
    <location>
        <position position="12"/>
    </location>
    <ligand>
        <name>[4Fe-4S] cluster</name>
        <dbReference type="ChEBI" id="CHEBI:49883"/>
        <label>1</label>
    </ligand>
</feature>
<feature type="binding site" evidence="1">
    <location>
        <position position="49"/>
    </location>
    <ligand>
        <name>[4Fe-4S] cluster</name>
        <dbReference type="ChEBI" id="CHEBI:49883"/>
        <label>1</label>
    </ligand>
</feature>
<feature type="binding site" evidence="1">
    <location>
        <position position="83"/>
    </location>
    <ligand>
        <name>[4Fe-4S] cluster</name>
        <dbReference type="ChEBI" id="CHEBI:49883"/>
        <label>1</label>
    </ligand>
</feature>
<feature type="binding site" evidence="1">
    <location>
        <position position="157"/>
    </location>
    <ligand>
        <name>[4Fe-4S] cluster</name>
        <dbReference type="ChEBI" id="CHEBI:49883"/>
        <label>2</label>
        <note>4Fe-4S-S-AdoMet</note>
    </ligand>
</feature>
<feature type="binding site" evidence="1">
    <location>
        <position position="161"/>
    </location>
    <ligand>
        <name>[4Fe-4S] cluster</name>
        <dbReference type="ChEBI" id="CHEBI:49883"/>
        <label>2</label>
        <note>4Fe-4S-S-AdoMet</note>
    </ligand>
</feature>
<feature type="binding site" evidence="1">
    <location>
        <position position="164"/>
    </location>
    <ligand>
        <name>[4Fe-4S] cluster</name>
        <dbReference type="ChEBI" id="CHEBI:49883"/>
        <label>2</label>
        <note>4Fe-4S-S-AdoMet</note>
    </ligand>
</feature>
<accession>Q5E6U2</accession>
<dbReference type="EC" id="2.8.4.3" evidence="1"/>
<dbReference type="EMBL" id="CP000020">
    <property type="protein sequence ID" value="AAW85254.1"/>
    <property type="molecule type" value="Genomic_DNA"/>
</dbReference>
<dbReference type="RefSeq" id="WP_005418189.1">
    <property type="nucleotide sequence ID" value="NZ_CAWLES010000001.1"/>
</dbReference>
<dbReference type="RefSeq" id="YP_204142.1">
    <property type="nucleotide sequence ID" value="NC_006840.2"/>
</dbReference>
<dbReference type="SMR" id="Q5E6U2"/>
<dbReference type="STRING" id="312309.VF_0759"/>
<dbReference type="EnsemblBacteria" id="AAW85254">
    <property type="protein sequence ID" value="AAW85254"/>
    <property type="gene ID" value="VF_0759"/>
</dbReference>
<dbReference type="GeneID" id="54163413"/>
<dbReference type="KEGG" id="vfi:VF_0759"/>
<dbReference type="PATRIC" id="fig|312309.11.peg.752"/>
<dbReference type="eggNOG" id="COG0621">
    <property type="taxonomic scope" value="Bacteria"/>
</dbReference>
<dbReference type="HOGENOM" id="CLU_018697_2_0_6"/>
<dbReference type="OrthoDB" id="9805215at2"/>
<dbReference type="Proteomes" id="UP000000537">
    <property type="component" value="Chromosome I"/>
</dbReference>
<dbReference type="GO" id="GO:0005829">
    <property type="term" value="C:cytosol"/>
    <property type="evidence" value="ECO:0007669"/>
    <property type="project" value="TreeGrafter"/>
</dbReference>
<dbReference type="GO" id="GO:0051539">
    <property type="term" value="F:4 iron, 4 sulfur cluster binding"/>
    <property type="evidence" value="ECO:0007669"/>
    <property type="project" value="UniProtKB-UniRule"/>
</dbReference>
<dbReference type="GO" id="GO:0046872">
    <property type="term" value="F:metal ion binding"/>
    <property type="evidence" value="ECO:0007669"/>
    <property type="project" value="UniProtKB-KW"/>
</dbReference>
<dbReference type="GO" id="GO:0035597">
    <property type="term" value="F:N6-isopentenyladenosine methylthiotransferase activity"/>
    <property type="evidence" value="ECO:0007669"/>
    <property type="project" value="TreeGrafter"/>
</dbReference>
<dbReference type="CDD" id="cd01335">
    <property type="entry name" value="Radical_SAM"/>
    <property type="match status" value="1"/>
</dbReference>
<dbReference type="FunFam" id="3.40.50.12160:FF:000001">
    <property type="entry name" value="tRNA-2-methylthio-N(6)-dimethylallyladenosine synthase"/>
    <property type="match status" value="1"/>
</dbReference>
<dbReference type="FunFam" id="3.80.30.20:FF:000001">
    <property type="entry name" value="tRNA-2-methylthio-N(6)-dimethylallyladenosine synthase 2"/>
    <property type="match status" value="1"/>
</dbReference>
<dbReference type="Gene3D" id="3.40.50.12160">
    <property type="entry name" value="Methylthiotransferase, N-terminal domain"/>
    <property type="match status" value="1"/>
</dbReference>
<dbReference type="Gene3D" id="3.80.30.20">
    <property type="entry name" value="tm_1862 like domain"/>
    <property type="match status" value="1"/>
</dbReference>
<dbReference type="HAMAP" id="MF_01864">
    <property type="entry name" value="tRNA_metthiotr_MiaB"/>
    <property type="match status" value="1"/>
</dbReference>
<dbReference type="InterPro" id="IPR006638">
    <property type="entry name" value="Elp3/MiaA/NifB-like_rSAM"/>
</dbReference>
<dbReference type="InterPro" id="IPR005839">
    <property type="entry name" value="Methylthiotransferase"/>
</dbReference>
<dbReference type="InterPro" id="IPR020612">
    <property type="entry name" value="Methylthiotransferase_CS"/>
</dbReference>
<dbReference type="InterPro" id="IPR013848">
    <property type="entry name" value="Methylthiotransferase_N"/>
</dbReference>
<dbReference type="InterPro" id="IPR038135">
    <property type="entry name" value="Methylthiotransferase_N_sf"/>
</dbReference>
<dbReference type="InterPro" id="IPR006463">
    <property type="entry name" value="MiaB_methiolase"/>
</dbReference>
<dbReference type="InterPro" id="IPR007197">
    <property type="entry name" value="rSAM"/>
</dbReference>
<dbReference type="InterPro" id="IPR023404">
    <property type="entry name" value="rSAM_horseshoe"/>
</dbReference>
<dbReference type="InterPro" id="IPR002792">
    <property type="entry name" value="TRAM_dom"/>
</dbReference>
<dbReference type="NCBIfam" id="TIGR01574">
    <property type="entry name" value="miaB-methiolase"/>
    <property type="match status" value="1"/>
</dbReference>
<dbReference type="NCBIfam" id="TIGR00089">
    <property type="entry name" value="MiaB/RimO family radical SAM methylthiotransferase"/>
    <property type="match status" value="1"/>
</dbReference>
<dbReference type="PANTHER" id="PTHR43020">
    <property type="entry name" value="CDK5 REGULATORY SUBUNIT-ASSOCIATED PROTEIN 1"/>
    <property type="match status" value="1"/>
</dbReference>
<dbReference type="PANTHER" id="PTHR43020:SF2">
    <property type="entry name" value="MITOCHONDRIAL TRNA METHYLTHIOTRANSFERASE CDK5RAP1"/>
    <property type="match status" value="1"/>
</dbReference>
<dbReference type="Pfam" id="PF04055">
    <property type="entry name" value="Radical_SAM"/>
    <property type="match status" value="1"/>
</dbReference>
<dbReference type="Pfam" id="PF01938">
    <property type="entry name" value="TRAM"/>
    <property type="match status" value="1"/>
</dbReference>
<dbReference type="Pfam" id="PF00919">
    <property type="entry name" value="UPF0004"/>
    <property type="match status" value="1"/>
</dbReference>
<dbReference type="SFLD" id="SFLDF00273">
    <property type="entry name" value="(dimethylallyl)adenosine_tRNA"/>
    <property type="match status" value="1"/>
</dbReference>
<dbReference type="SFLD" id="SFLDG01082">
    <property type="entry name" value="B12-binding_domain_containing"/>
    <property type="match status" value="1"/>
</dbReference>
<dbReference type="SFLD" id="SFLDG01061">
    <property type="entry name" value="methylthiotransferase"/>
    <property type="match status" value="1"/>
</dbReference>
<dbReference type="SMART" id="SM00729">
    <property type="entry name" value="Elp3"/>
    <property type="match status" value="1"/>
</dbReference>
<dbReference type="SUPFAM" id="SSF102114">
    <property type="entry name" value="Radical SAM enzymes"/>
    <property type="match status" value="1"/>
</dbReference>
<dbReference type="PROSITE" id="PS51449">
    <property type="entry name" value="MTTASE_N"/>
    <property type="match status" value="1"/>
</dbReference>
<dbReference type="PROSITE" id="PS01278">
    <property type="entry name" value="MTTASE_RADICAL"/>
    <property type="match status" value="1"/>
</dbReference>
<dbReference type="PROSITE" id="PS51918">
    <property type="entry name" value="RADICAL_SAM"/>
    <property type="match status" value="1"/>
</dbReference>
<dbReference type="PROSITE" id="PS50926">
    <property type="entry name" value="TRAM"/>
    <property type="match status" value="1"/>
</dbReference>
<gene>
    <name evidence="1" type="primary">miaB</name>
    <name type="ordered locus">VF_0759</name>
</gene>
<keyword id="KW-0004">4Fe-4S</keyword>
<keyword id="KW-0963">Cytoplasm</keyword>
<keyword id="KW-0408">Iron</keyword>
<keyword id="KW-0411">Iron-sulfur</keyword>
<keyword id="KW-0479">Metal-binding</keyword>
<keyword id="KW-1185">Reference proteome</keyword>
<keyword id="KW-0949">S-adenosyl-L-methionine</keyword>
<keyword id="KW-0808">Transferase</keyword>
<keyword id="KW-0819">tRNA processing</keyword>
<name>MIAB_ALIF1</name>
<organism>
    <name type="scientific">Aliivibrio fischeri (strain ATCC 700601 / ES114)</name>
    <name type="common">Vibrio fischeri</name>
    <dbReference type="NCBI Taxonomy" id="312309"/>
    <lineage>
        <taxon>Bacteria</taxon>
        <taxon>Pseudomonadati</taxon>
        <taxon>Pseudomonadota</taxon>
        <taxon>Gammaproteobacteria</taxon>
        <taxon>Vibrionales</taxon>
        <taxon>Vibrionaceae</taxon>
        <taxon>Aliivibrio</taxon>
    </lineage>
</organism>